<sequence>MNVPDRKKALEAAIAYIEKQFGAGSIMSLGKHSATHEISTIKTGALSLDLALGIGGVPKGRIVEIFGPESSGKTTLATHIVANAQKMGGVAAYIDAEHALDPGYASLIGANINDLMISQPDCGEDALSIAELLARSGAVDVIVIDSVAALVPKSELEGDIGDVHVGLQARMMSQALRKLTATLARSQTCAIFINQIREKIGVSFGNPETTTGGRALKFYSSIRMDIRRIGAIKGNESFDLGNRIKVKVAKNKLAPPFRTAEFDILFNEGISSAGCILDLAVEHNIVEKKGSWFNYQDRKLGQGREAVREELKKNKKLFDELEKRIYDISSASKVVAVEEKKEELKAQPVA</sequence>
<evidence type="ECO:0000255" key="1">
    <source>
        <dbReference type="HAMAP-Rule" id="MF_00268"/>
    </source>
</evidence>
<comment type="function">
    <text evidence="1">Can catalyze the hydrolysis of ATP in the presence of single-stranded DNA, the ATP-dependent uptake of single-stranded DNA by duplex DNA, and the ATP-dependent hybridization of homologous single-stranded DNAs. It interacts with LexA causing its activation and leading to its autocatalytic cleavage.</text>
</comment>
<comment type="subcellular location">
    <subcellularLocation>
        <location evidence="1">Cytoplasm</location>
    </subcellularLocation>
</comment>
<comment type="similarity">
    <text evidence="1">Belongs to the RecA family.</text>
</comment>
<dbReference type="EMBL" id="AE015925">
    <property type="protein sequence ID" value="AAP05734.1"/>
    <property type="molecule type" value="Genomic_DNA"/>
</dbReference>
<dbReference type="RefSeq" id="WP_011006947.1">
    <property type="nucleotide sequence ID" value="NC_003361.3"/>
</dbReference>
<dbReference type="SMR" id="Q821E6"/>
<dbReference type="STRING" id="227941.CCA_00995"/>
<dbReference type="KEGG" id="cca:CCA_00995"/>
<dbReference type="eggNOG" id="COG0468">
    <property type="taxonomic scope" value="Bacteria"/>
</dbReference>
<dbReference type="HOGENOM" id="CLU_040469_3_2_0"/>
<dbReference type="OrthoDB" id="9776733at2"/>
<dbReference type="Proteomes" id="UP000002193">
    <property type="component" value="Chromosome"/>
</dbReference>
<dbReference type="GO" id="GO:0005829">
    <property type="term" value="C:cytosol"/>
    <property type="evidence" value="ECO:0007669"/>
    <property type="project" value="TreeGrafter"/>
</dbReference>
<dbReference type="GO" id="GO:0005524">
    <property type="term" value="F:ATP binding"/>
    <property type="evidence" value="ECO:0007669"/>
    <property type="project" value="UniProtKB-UniRule"/>
</dbReference>
<dbReference type="GO" id="GO:0016887">
    <property type="term" value="F:ATP hydrolysis activity"/>
    <property type="evidence" value="ECO:0007669"/>
    <property type="project" value="InterPro"/>
</dbReference>
<dbReference type="GO" id="GO:0140664">
    <property type="term" value="F:ATP-dependent DNA damage sensor activity"/>
    <property type="evidence" value="ECO:0007669"/>
    <property type="project" value="InterPro"/>
</dbReference>
<dbReference type="GO" id="GO:0003684">
    <property type="term" value="F:damaged DNA binding"/>
    <property type="evidence" value="ECO:0007669"/>
    <property type="project" value="UniProtKB-UniRule"/>
</dbReference>
<dbReference type="GO" id="GO:0003697">
    <property type="term" value="F:single-stranded DNA binding"/>
    <property type="evidence" value="ECO:0007669"/>
    <property type="project" value="UniProtKB-UniRule"/>
</dbReference>
<dbReference type="GO" id="GO:0006310">
    <property type="term" value="P:DNA recombination"/>
    <property type="evidence" value="ECO:0007669"/>
    <property type="project" value="UniProtKB-UniRule"/>
</dbReference>
<dbReference type="GO" id="GO:0006281">
    <property type="term" value="P:DNA repair"/>
    <property type="evidence" value="ECO:0007669"/>
    <property type="project" value="UniProtKB-UniRule"/>
</dbReference>
<dbReference type="GO" id="GO:0009432">
    <property type="term" value="P:SOS response"/>
    <property type="evidence" value="ECO:0007669"/>
    <property type="project" value="UniProtKB-UniRule"/>
</dbReference>
<dbReference type="CDD" id="cd00983">
    <property type="entry name" value="RecA"/>
    <property type="match status" value="1"/>
</dbReference>
<dbReference type="FunFam" id="3.40.50.300:FF:000087">
    <property type="entry name" value="Recombinase RecA"/>
    <property type="match status" value="1"/>
</dbReference>
<dbReference type="Gene3D" id="3.40.50.300">
    <property type="entry name" value="P-loop containing nucleotide triphosphate hydrolases"/>
    <property type="match status" value="1"/>
</dbReference>
<dbReference type="HAMAP" id="MF_00268">
    <property type="entry name" value="RecA"/>
    <property type="match status" value="1"/>
</dbReference>
<dbReference type="InterPro" id="IPR003593">
    <property type="entry name" value="AAA+_ATPase"/>
</dbReference>
<dbReference type="InterPro" id="IPR013765">
    <property type="entry name" value="DNA_recomb/repair_RecA"/>
</dbReference>
<dbReference type="InterPro" id="IPR020584">
    <property type="entry name" value="DNA_recomb/repair_RecA_CS"/>
</dbReference>
<dbReference type="InterPro" id="IPR027417">
    <property type="entry name" value="P-loop_NTPase"/>
</dbReference>
<dbReference type="InterPro" id="IPR049261">
    <property type="entry name" value="RecA-like_C"/>
</dbReference>
<dbReference type="InterPro" id="IPR049428">
    <property type="entry name" value="RecA-like_N"/>
</dbReference>
<dbReference type="InterPro" id="IPR020588">
    <property type="entry name" value="RecA_ATP-bd"/>
</dbReference>
<dbReference type="InterPro" id="IPR023400">
    <property type="entry name" value="RecA_C_sf"/>
</dbReference>
<dbReference type="InterPro" id="IPR020587">
    <property type="entry name" value="RecA_monomer-monomer_interface"/>
</dbReference>
<dbReference type="NCBIfam" id="TIGR02012">
    <property type="entry name" value="tigrfam_recA"/>
    <property type="match status" value="1"/>
</dbReference>
<dbReference type="PANTHER" id="PTHR45900:SF1">
    <property type="entry name" value="MITOCHONDRIAL DNA REPAIR PROTEIN RECA HOMOLOG-RELATED"/>
    <property type="match status" value="1"/>
</dbReference>
<dbReference type="PANTHER" id="PTHR45900">
    <property type="entry name" value="RECA"/>
    <property type="match status" value="1"/>
</dbReference>
<dbReference type="Pfam" id="PF00154">
    <property type="entry name" value="RecA"/>
    <property type="match status" value="1"/>
</dbReference>
<dbReference type="Pfam" id="PF21096">
    <property type="entry name" value="RecA_C"/>
    <property type="match status" value="1"/>
</dbReference>
<dbReference type="PRINTS" id="PR00142">
    <property type="entry name" value="RECA"/>
</dbReference>
<dbReference type="SMART" id="SM00382">
    <property type="entry name" value="AAA"/>
    <property type="match status" value="1"/>
</dbReference>
<dbReference type="SUPFAM" id="SSF52540">
    <property type="entry name" value="P-loop containing nucleoside triphosphate hydrolases"/>
    <property type="match status" value="1"/>
</dbReference>
<dbReference type="SUPFAM" id="SSF54752">
    <property type="entry name" value="RecA protein, C-terminal domain"/>
    <property type="match status" value="1"/>
</dbReference>
<dbReference type="PROSITE" id="PS00321">
    <property type="entry name" value="RECA_1"/>
    <property type="match status" value="1"/>
</dbReference>
<dbReference type="PROSITE" id="PS50162">
    <property type="entry name" value="RECA_2"/>
    <property type="match status" value="1"/>
</dbReference>
<dbReference type="PROSITE" id="PS50163">
    <property type="entry name" value="RECA_3"/>
    <property type="match status" value="1"/>
</dbReference>
<protein>
    <recommendedName>
        <fullName evidence="1">Protein RecA</fullName>
    </recommendedName>
    <alternativeName>
        <fullName evidence="1">Recombinase A</fullName>
    </alternativeName>
</protein>
<proteinExistence type="inferred from homology"/>
<accession>Q821E6</accession>
<reference key="1">
    <citation type="journal article" date="2003" name="Nucleic Acids Res.">
        <title>Genome sequence of Chlamydophila caviae (Chlamydia psittaci GPIC): examining the role of niche-specific genes in the evolution of the Chlamydiaceae.</title>
        <authorList>
            <person name="Read T.D."/>
            <person name="Myers G.S.A."/>
            <person name="Brunham R.C."/>
            <person name="Nelson W.C."/>
            <person name="Paulsen I.T."/>
            <person name="Heidelberg J.F."/>
            <person name="Holtzapple E.K."/>
            <person name="Khouri H.M."/>
            <person name="Federova N.B."/>
            <person name="Carty H.A."/>
            <person name="Umayam L.A."/>
            <person name="Haft D.H."/>
            <person name="Peterson J.D."/>
            <person name="Beanan M.J."/>
            <person name="White O."/>
            <person name="Salzberg S.L."/>
            <person name="Hsia R.-C."/>
            <person name="McClarty G."/>
            <person name="Rank R.G."/>
            <person name="Bavoil P.M."/>
            <person name="Fraser C.M."/>
        </authorList>
    </citation>
    <scope>NUCLEOTIDE SEQUENCE [LARGE SCALE GENOMIC DNA]</scope>
    <source>
        <strain>ATCC VR-813 / DSM 19441 / 03DC25 / GPIC</strain>
    </source>
</reference>
<feature type="chain" id="PRO_0000122683" description="Protein RecA">
    <location>
        <begin position="1"/>
        <end position="350"/>
    </location>
</feature>
<feature type="binding site" evidence="1">
    <location>
        <begin position="67"/>
        <end position="74"/>
    </location>
    <ligand>
        <name>ATP</name>
        <dbReference type="ChEBI" id="CHEBI:30616"/>
    </ligand>
</feature>
<name>RECA_CHLCV</name>
<gene>
    <name evidence="1" type="primary">recA</name>
    <name type="ordered locus">CCA_00995</name>
</gene>
<organism>
    <name type="scientific">Chlamydia caviae (strain ATCC VR-813 / DSM 19441 / 03DC25 / GPIC)</name>
    <name type="common">Chlamydophila caviae</name>
    <dbReference type="NCBI Taxonomy" id="227941"/>
    <lineage>
        <taxon>Bacteria</taxon>
        <taxon>Pseudomonadati</taxon>
        <taxon>Chlamydiota</taxon>
        <taxon>Chlamydiia</taxon>
        <taxon>Chlamydiales</taxon>
        <taxon>Chlamydiaceae</taxon>
        <taxon>Chlamydia/Chlamydophila group</taxon>
        <taxon>Chlamydia</taxon>
    </lineage>
</organism>
<keyword id="KW-0067">ATP-binding</keyword>
<keyword id="KW-0963">Cytoplasm</keyword>
<keyword id="KW-0227">DNA damage</keyword>
<keyword id="KW-0233">DNA recombination</keyword>
<keyword id="KW-0234">DNA repair</keyword>
<keyword id="KW-0238">DNA-binding</keyword>
<keyword id="KW-0547">Nucleotide-binding</keyword>
<keyword id="KW-0742">SOS response</keyword>